<sequence>MIQQESRLRVADNTGAKEILCIRVLGGSSRRYAGIGDIIVATVKDAIPGGNIKKGEVVKAVIVRTTKERRRPDGSYIKFDENAAVLIKPDNDPRGTRIFGPVGRELREKKFMKIVSLAPEVL</sequence>
<reference key="1">
    <citation type="submission" date="2009-03" db="EMBL/GenBank/DDBJ databases">
        <title>Comparison of the complete genome sequences of Rhodococcus erythropolis PR4 and Rhodococcus opacus B4.</title>
        <authorList>
            <person name="Takarada H."/>
            <person name="Sekine M."/>
            <person name="Hosoyama A."/>
            <person name="Yamada R."/>
            <person name="Fujisawa T."/>
            <person name="Omata S."/>
            <person name="Shimizu A."/>
            <person name="Tsukatani N."/>
            <person name="Tanikawa S."/>
            <person name="Fujita N."/>
            <person name="Harayama S."/>
        </authorList>
    </citation>
    <scope>NUCLEOTIDE SEQUENCE [LARGE SCALE GENOMIC DNA]</scope>
    <source>
        <strain>B4</strain>
    </source>
</reference>
<organism>
    <name type="scientific">Rhodococcus opacus (strain B4)</name>
    <dbReference type="NCBI Taxonomy" id="632772"/>
    <lineage>
        <taxon>Bacteria</taxon>
        <taxon>Bacillati</taxon>
        <taxon>Actinomycetota</taxon>
        <taxon>Actinomycetes</taxon>
        <taxon>Mycobacteriales</taxon>
        <taxon>Nocardiaceae</taxon>
        <taxon>Rhodococcus</taxon>
    </lineage>
</organism>
<keyword id="KW-0687">Ribonucleoprotein</keyword>
<keyword id="KW-0689">Ribosomal protein</keyword>
<keyword id="KW-0694">RNA-binding</keyword>
<keyword id="KW-0699">rRNA-binding</keyword>
<gene>
    <name evidence="1" type="primary">rplN</name>
    <name type="ordered locus">ROP_61960</name>
</gene>
<evidence type="ECO:0000255" key="1">
    <source>
        <dbReference type="HAMAP-Rule" id="MF_01367"/>
    </source>
</evidence>
<evidence type="ECO:0000305" key="2"/>
<comment type="function">
    <text evidence="1">Binds to 23S rRNA. Forms part of two intersubunit bridges in the 70S ribosome.</text>
</comment>
<comment type="subunit">
    <text evidence="1">Part of the 50S ribosomal subunit. Forms a cluster with proteins L3 and L19. In the 70S ribosome, L14 and L19 interact and together make contacts with the 16S rRNA in bridges B5 and B8.</text>
</comment>
<comment type="similarity">
    <text evidence="1">Belongs to the universal ribosomal protein uL14 family.</text>
</comment>
<accession>C1B022</accession>
<feature type="chain" id="PRO_1000166934" description="Large ribosomal subunit protein uL14">
    <location>
        <begin position="1"/>
        <end position="122"/>
    </location>
</feature>
<name>RL14_RHOOB</name>
<protein>
    <recommendedName>
        <fullName evidence="1">Large ribosomal subunit protein uL14</fullName>
    </recommendedName>
    <alternativeName>
        <fullName evidence="2">50S ribosomal protein L14</fullName>
    </alternativeName>
</protein>
<proteinExistence type="inferred from homology"/>
<dbReference type="EMBL" id="AP011115">
    <property type="protein sequence ID" value="BAH54443.1"/>
    <property type="molecule type" value="Genomic_DNA"/>
</dbReference>
<dbReference type="RefSeq" id="WP_005239639.1">
    <property type="nucleotide sequence ID" value="NC_012522.1"/>
</dbReference>
<dbReference type="SMR" id="C1B022"/>
<dbReference type="STRING" id="632772.ROP_61960"/>
<dbReference type="GeneID" id="69890526"/>
<dbReference type="KEGG" id="rop:ROP_61960"/>
<dbReference type="PATRIC" id="fig|632772.20.peg.6472"/>
<dbReference type="HOGENOM" id="CLU_095071_2_1_11"/>
<dbReference type="OrthoDB" id="9806379at2"/>
<dbReference type="Proteomes" id="UP000002212">
    <property type="component" value="Chromosome"/>
</dbReference>
<dbReference type="GO" id="GO:0022625">
    <property type="term" value="C:cytosolic large ribosomal subunit"/>
    <property type="evidence" value="ECO:0007669"/>
    <property type="project" value="TreeGrafter"/>
</dbReference>
<dbReference type="GO" id="GO:0070180">
    <property type="term" value="F:large ribosomal subunit rRNA binding"/>
    <property type="evidence" value="ECO:0007669"/>
    <property type="project" value="TreeGrafter"/>
</dbReference>
<dbReference type="GO" id="GO:0003735">
    <property type="term" value="F:structural constituent of ribosome"/>
    <property type="evidence" value="ECO:0007669"/>
    <property type="project" value="InterPro"/>
</dbReference>
<dbReference type="GO" id="GO:0006412">
    <property type="term" value="P:translation"/>
    <property type="evidence" value="ECO:0007669"/>
    <property type="project" value="UniProtKB-UniRule"/>
</dbReference>
<dbReference type="CDD" id="cd00337">
    <property type="entry name" value="Ribosomal_uL14"/>
    <property type="match status" value="1"/>
</dbReference>
<dbReference type="FunFam" id="2.40.150.20:FF:000001">
    <property type="entry name" value="50S ribosomal protein L14"/>
    <property type="match status" value="1"/>
</dbReference>
<dbReference type="Gene3D" id="2.40.150.20">
    <property type="entry name" value="Ribosomal protein L14"/>
    <property type="match status" value="1"/>
</dbReference>
<dbReference type="HAMAP" id="MF_01367">
    <property type="entry name" value="Ribosomal_uL14"/>
    <property type="match status" value="1"/>
</dbReference>
<dbReference type="InterPro" id="IPR000218">
    <property type="entry name" value="Ribosomal_uL14"/>
</dbReference>
<dbReference type="InterPro" id="IPR005745">
    <property type="entry name" value="Ribosomal_uL14_bac-type"/>
</dbReference>
<dbReference type="InterPro" id="IPR019972">
    <property type="entry name" value="Ribosomal_uL14_CS"/>
</dbReference>
<dbReference type="InterPro" id="IPR036853">
    <property type="entry name" value="Ribosomal_uL14_sf"/>
</dbReference>
<dbReference type="NCBIfam" id="TIGR01067">
    <property type="entry name" value="rplN_bact"/>
    <property type="match status" value="1"/>
</dbReference>
<dbReference type="PANTHER" id="PTHR11761">
    <property type="entry name" value="50S/60S RIBOSOMAL PROTEIN L14/L23"/>
    <property type="match status" value="1"/>
</dbReference>
<dbReference type="PANTHER" id="PTHR11761:SF3">
    <property type="entry name" value="LARGE RIBOSOMAL SUBUNIT PROTEIN UL14M"/>
    <property type="match status" value="1"/>
</dbReference>
<dbReference type="Pfam" id="PF00238">
    <property type="entry name" value="Ribosomal_L14"/>
    <property type="match status" value="1"/>
</dbReference>
<dbReference type="SMART" id="SM01374">
    <property type="entry name" value="Ribosomal_L14"/>
    <property type="match status" value="1"/>
</dbReference>
<dbReference type="SUPFAM" id="SSF50193">
    <property type="entry name" value="Ribosomal protein L14"/>
    <property type="match status" value="1"/>
</dbReference>
<dbReference type="PROSITE" id="PS00049">
    <property type="entry name" value="RIBOSOMAL_L14"/>
    <property type="match status" value="1"/>
</dbReference>